<comment type="function">
    <text evidence="1">Catalyzes the dephosphorylation of undecaprenyl diphosphate (UPP). Confers resistance to bacitracin.</text>
</comment>
<comment type="catalytic activity">
    <reaction evidence="1">
        <text>di-trans,octa-cis-undecaprenyl diphosphate + H2O = di-trans,octa-cis-undecaprenyl phosphate + phosphate + H(+)</text>
        <dbReference type="Rhea" id="RHEA:28094"/>
        <dbReference type="ChEBI" id="CHEBI:15377"/>
        <dbReference type="ChEBI" id="CHEBI:15378"/>
        <dbReference type="ChEBI" id="CHEBI:43474"/>
        <dbReference type="ChEBI" id="CHEBI:58405"/>
        <dbReference type="ChEBI" id="CHEBI:60392"/>
        <dbReference type="EC" id="3.6.1.27"/>
    </reaction>
</comment>
<comment type="subcellular location">
    <subcellularLocation>
        <location evidence="1">Cell inner membrane</location>
        <topology evidence="1">Multi-pass membrane protein</topology>
    </subcellularLocation>
</comment>
<comment type="miscellaneous">
    <text>Bacitracin is thought to be involved in the inhibition of peptidoglycan synthesis by sequestering undecaprenyl diphosphate, thereby reducing the pool of lipid carrier available.</text>
</comment>
<comment type="similarity">
    <text evidence="1">Belongs to the UppP family.</text>
</comment>
<dbReference type="EC" id="3.6.1.27" evidence="1"/>
<dbReference type="EMBL" id="CP000969">
    <property type="protein sequence ID" value="ACB08396.1"/>
    <property type="molecule type" value="Genomic_DNA"/>
</dbReference>
<dbReference type="RefSeq" id="WP_012310275.1">
    <property type="nucleotide sequence ID" value="NC_010483.1"/>
</dbReference>
<dbReference type="SMR" id="B1LC41"/>
<dbReference type="KEGG" id="trq:TRQ2_0034"/>
<dbReference type="HOGENOM" id="CLU_060296_1_2_0"/>
<dbReference type="Proteomes" id="UP000001687">
    <property type="component" value="Chromosome"/>
</dbReference>
<dbReference type="GO" id="GO:0005886">
    <property type="term" value="C:plasma membrane"/>
    <property type="evidence" value="ECO:0007669"/>
    <property type="project" value="UniProtKB-SubCell"/>
</dbReference>
<dbReference type="GO" id="GO:0050380">
    <property type="term" value="F:undecaprenyl-diphosphatase activity"/>
    <property type="evidence" value="ECO:0007669"/>
    <property type="project" value="UniProtKB-UniRule"/>
</dbReference>
<dbReference type="GO" id="GO:0071555">
    <property type="term" value="P:cell wall organization"/>
    <property type="evidence" value="ECO:0007669"/>
    <property type="project" value="UniProtKB-KW"/>
</dbReference>
<dbReference type="GO" id="GO:0009252">
    <property type="term" value="P:peptidoglycan biosynthetic process"/>
    <property type="evidence" value="ECO:0007669"/>
    <property type="project" value="UniProtKB-KW"/>
</dbReference>
<dbReference type="GO" id="GO:0008360">
    <property type="term" value="P:regulation of cell shape"/>
    <property type="evidence" value="ECO:0007669"/>
    <property type="project" value="UniProtKB-KW"/>
</dbReference>
<dbReference type="GO" id="GO:0046677">
    <property type="term" value="P:response to antibiotic"/>
    <property type="evidence" value="ECO:0007669"/>
    <property type="project" value="UniProtKB-UniRule"/>
</dbReference>
<dbReference type="HAMAP" id="MF_01006">
    <property type="entry name" value="Undec_diphosphatase"/>
    <property type="match status" value="1"/>
</dbReference>
<dbReference type="InterPro" id="IPR003824">
    <property type="entry name" value="UppP"/>
</dbReference>
<dbReference type="PANTHER" id="PTHR30622">
    <property type="entry name" value="UNDECAPRENYL-DIPHOSPHATASE"/>
    <property type="match status" value="1"/>
</dbReference>
<dbReference type="PANTHER" id="PTHR30622:SF4">
    <property type="entry name" value="UNDECAPRENYL-DIPHOSPHATASE"/>
    <property type="match status" value="1"/>
</dbReference>
<dbReference type="Pfam" id="PF02673">
    <property type="entry name" value="BacA"/>
    <property type="match status" value="1"/>
</dbReference>
<reference key="1">
    <citation type="journal article" date="2011" name="J. Bacteriol.">
        <title>Genome sequence of Thermotoga sp. strain RQ2, a hyperthermophilic bacterium isolated from a geothermally heated region of the seafloor near Ribeira Quente, the Azores.</title>
        <authorList>
            <person name="Swithers K.S."/>
            <person name="DiPippo J.L."/>
            <person name="Bruce D.C."/>
            <person name="Detter C."/>
            <person name="Tapia R."/>
            <person name="Han S."/>
            <person name="Saunders E."/>
            <person name="Goodwin L.A."/>
            <person name="Han J."/>
            <person name="Woyke T."/>
            <person name="Pitluck S."/>
            <person name="Pennacchio L."/>
            <person name="Nolan M."/>
            <person name="Mikhailova N."/>
            <person name="Lykidis A."/>
            <person name="Land M.L."/>
            <person name="Brettin T."/>
            <person name="Stetter K.O."/>
            <person name="Nelson K.E."/>
            <person name="Gogarten J.P."/>
            <person name="Noll K.M."/>
        </authorList>
    </citation>
    <scope>NUCLEOTIDE SEQUENCE [LARGE SCALE GENOMIC DNA]</scope>
    <source>
        <strain>RQ2</strain>
    </source>
</reference>
<proteinExistence type="inferred from homology"/>
<name>UPPP_THESQ</name>
<organism>
    <name type="scientific">Thermotoga sp. (strain RQ2)</name>
    <dbReference type="NCBI Taxonomy" id="126740"/>
    <lineage>
        <taxon>Bacteria</taxon>
        <taxon>Thermotogati</taxon>
        <taxon>Thermotogota</taxon>
        <taxon>Thermotogae</taxon>
        <taxon>Thermotogales</taxon>
        <taxon>Thermotogaceae</taxon>
        <taxon>Thermotoga</taxon>
    </lineage>
</organism>
<feature type="chain" id="PRO_1000197418" description="Undecaprenyl-diphosphatase">
    <location>
        <begin position="1"/>
        <end position="237"/>
    </location>
</feature>
<feature type="transmembrane region" description="Helical" evidence="1">
    <location>
        <begin position="38"/>
        <end position="58"/>
    </location>
</feature>
<feature type="transmembrane region" description="Helical" evidence="1">
    <location>
        <begin position="65"/>
        <end position="85"/>
    </location>
</feature>
<feature type="transmembrane region" description="Helical" evidence="1">
    <location>
        <begin position="92"/>
        <end position="112"/>
    </location>
</feature>
<feature type="transmembrane region" description="Helical" evidence="1">
    <location>
        <begin position="126"/>
        <end position="146"/>
    </location>
</feature>
<feature type="transmembrane region" description="Helical" evidence="1">
    <location>
        <begin position="166"/>
        <end position="186"/>
    </location>
</feature>
<feature type="transmembrane region" description="Helical" evidence="1">
    <location>
        <begin position="191"/>
        <end position="211"/>
    </location>
</feature>
<feature type="transmembrane region" description="Helical" evidence="1">
    <location>
        <begin position="217"/>
        <end position="237"/>
    </location>
</feature>
<accession>B1LC41</accession>
<keyword id="KW-0046">Antibiotic resistance</keyword>
<keyword id="KW-0997">Cell inner membrane</keyword>
<keyword id="KW-1003">Cell membrane</keyword>
<keyword id="KW-0133">Cell shape</keyword>
<keyword id="KW-0961">Cell wall biogenesis/degradation</keyword>
<keyword id="KW-0378">Hydrolase</keyword>
<keyword id="KW-0472">Membrane</keyword>
<keyword id="KW-0573">Peptidoglycan synthesis</keyword>
<keyword id="KW-0812">Transmembrane</keyword>
<keyword id="KW-1133">Transmembrane helix</keyword>
<evidence type="ECO:0000255" key="1">
    <source>
        <dbReference type="HAMAP-Rule" id="MF_01006"/>
    </source>
</evidence>
<protein>
    <recommendedName>
        <fullName evidence="1">Undecaprenyl-diphosphatase</fullName>
        <ecNumber evidence="1">3.6.1.27</ecNumber>
    </recommendedName>
    <alternativeName>
        <fullName evidence="1">Bacitracin resistance protein</fullName>
    </alternativeName>
    <alternativeName>
        <fullName evidence="1">Undecaprenyl pyrophosphate phosphatase</fullName>
    </alternativeName>
</protein>
<gene>
    <name evidence="1" type="primary">uppP</name>
    <name type="ordered locus">TRQ2_0034</name>
</gene>
<sequence>MDLLLGIIQGLTEFLPVSSSGHLTLLSHLLKTDLNAYQTAVLHLGTLVSVVLFAFDGIRRSLRSWRIILNLIVSTIPAGVFGVLFEKQIDQLFSSPRFLPLFFSVTALILMFTRYSSSGEKRMENMSFLDALLVGIAQLFALFPGISRSGITVSSLLFMKYRGEDALQYSFLMSIPVVLGAGILGLEKGNVTILAPIFAFLSGLFALYVLSRSVRSGKIWQFSYYCLFVAILSYLVG</sequence>